<organism>
    <name type="scientific">Bacillus cereus (strain AH820)</name>
    <dbReference type="NCBI Taxonomy" id="405535"/>
    <lineage>
        <taxon>Bacteria</taxon>
        <taxon>Bacillati</taxon>
        <taxon>Bacillota</taxon>
        <taxon>Bacilli</taxon>
        <taxon>Bacillales</taxon>
        <taxon>Bacillaceae</taxon>
        <taxon>Bacillus</taxon>
        <taxon>Bacillus cereus group</taxon>
    </lineage>
</organism>
<dbReference type="EC" id="2.1.2.10" evidence="1"/>
<dbReference type="EMBL" id="CP001283">
    <property type="protein sequence ID" value="ACK91320.1"/>
    <property type="molecule type" value="Genomic_DNA"/>
</dbReference>
<dbReference type="RefSeq" id="WP_000631769.1">
    <property type="nucleotide sequence ID" value="NC_011773.1"/>
</dbReference>
<dbReference type="SMR" id="B7JMV1"/>
<dbReference type="GeneID" id="72450912"/>
<dbReference type="KEGG" id="bcu:BCAH820_4247"/>
<dbReference type="HOGENOM" id="CLU_007884_10_2_9"/>
<dbReference type="Proteomes" id="UP000001363">
    <property type="component" value="Chromosome"/>
</dbReference>
<dbReference type="GO" id="GO:0005829">
    <property type="term" value="C:cytosol"/>
    <property type="evidence" value="ECO:0007669"/>
    <property type="project" value="TreeGrafter"/>
</dbReference>
<dbReference type="GO" id="GO:0005960">
    <property type="term" value="C:glycine cleavage complex"/>
    <property type="evidence" value="ECO:0007669"/>
    <property type="project" value="InterPro"/>
</dbReference>
<dbReference type="GO" id="GO:0004047">
    <property type="term" value="F:aminomethyltransferase activity"/>
    <property type="evidence" value="ECO:0007669"/>
    <property type="project" value="UniProtKB-UniRule"/>
</dbReference>
<dbReference type="GO" id="GO:0008483">
    <property type="term" value="F:transaminase activity"/>
    <property type="evidence" value="ECO:0007669"/>
    <property type="project" value="UniProtKB-KW"/>
</dbReference>
<dbReference type="GO" id="GO:0019464">
    <property type="term" value="P:glycine decarboxylation via glycine cleavage system"/>
    <property type="evidence" value="ECO:0007669"/>
    <property type="project" value="UniProtKB-UniRule"/>
</dbReference>
<dbReference type="FunFam" id="2.40.30.110:FF:000003">
    <property type="entry name" value="Aminomethyltransferase"/>
    <property type="match status" value="1"/>
</dbReference>
<dbReference type="FunFam" id="3.30.70.1400:FF:000001">
    <property type="entry name" value="Aminomethyltransferase"/>
    <property type="match status" value="1"/>
</dbReference>
<dbReference type="FunFam" id="4.10.1250.10:FF:000001">
    <property type="entry name" value="Aminomethyltransferase"/>
    <property type="match status" value="1"/>
</dbReference>
<dbReference type="Gene3D" id="2.40.30.110">
    <property type="entry name" value="Aminomethyltransferase beta-barrel domains"/>
    <property type="match status" value="1"/>
</dbReference>
<dbReference type="Gene3D" id="3.30.70.1400">
    <property type="entry name" value="Aminomethyltransferase beta-barrel domains"/>
    <property type="match status" value="1"/>
</dbReference>
<dbReference type="Gene3D" id="4.10.1250.10">
    <property type="entry name" value="Aminomethyltransferase fragment"/>
    <property type="match status" value="1"/>
</dbReference>
<dbReference type="Gene3D" id="3.30.1360.120">
    <property type="entry name" value="Probable tRNA modification gtpase trme, domain 1"/>
    <property type="match status" value="1"/>
</dbReference>
<dbReference type="HAMAP" id="MF_00259">
    <property type="entry name" value="GcvT"/>
    <property type="match status" value="1"/>
</dbReference>
<dbReference type="InterPro" id="IPR006223">
    <property type="entry name" value="GCS_T"/>
</dbReference>
<dbReference type="InterPro" id="IPR022903">
    <property type="entry name" value="GCS_T_bac"/>
</dbReference>
<dbReference type="InterPro" id="IPR013977">
    <property type="entry name" value="GCST_C"/>
</dbReference>
<dbReference type="InterPro" id="IPR006222">
    <property type="entry name" value="GCV_T_N"/>
</dbReference>
<dbReference type="InterPro" id="IPR028896">
    <property type="entry name" value="GcvT/YgfZ/DmdA"/>
</dbReference>
<dbReference type="InterPro" id="IPR029043">
    <property type="entry name" value="GcvT/YgfZ_C"/>
</dbReference>
<dbReference type="InterPro" id="IPR027266">
    <property type="entry name" value="TrmE/GcvT_dom1"/>
</dbReference>
<dbReference type="NCBIfam" id="TIGR00528">
    <property type="entry name" value="gcvT"/>
    <property type="match status" value="1"/>
</dbReference>
<dbReference type="NCBIfam" id="NF001567">
    <property type="entry name" value="PRK00389.1"/>
    <property type="match status" value="1"/>
</dbReference>
<dbReference type="PANTHER" id="PTHR43757">
    <property type="entry name" value="AMINOMETHYLTRANSFERASE"/>
    <property type="match status" value="1"/>
</dbReference>
<dbReference type="PANTHER" id="PTHR43757:SF2">
    <property type="entry name" value="AMINOMETHYLTRANSFERASE, MITOCHONDRIAL"/>
    <property type="match status" value="1"/>
</dbReference>
<dbReference type="Pfam" id="PF01571">
    <property type="entry name" value="GCV_T"/>
    <property type="match status" value="1"/>
</dbReference>
<dbReference type="Pfam" id="PF08669">
    <property type="entry name" value="GCV_T_C"/>
    <property type="match status" value="1"/>
</dbReference>
<dbReference type="PIRSF" id="PIRSF006487">
    <property type="entry name" value="GcvT"/>
    <property type="match status" value="1"/>
</dbReference>
<dbReference type="SUPFAM" id="SSF101790">
    <property type="entry name" value="Aminomethyltransferase beta-barrel domain"/>
    <property type="match status" value="1"/>
</dbReference>
<dbReference type="SUPFAM" id="SSF103025">
    <property type="entry name" value="Folate-binding domain"/>
    <property type="match status" value="1"/>
</dbReference>
<keyword id="KW-0032">Aminotransferase</keyword>
<keyword id="KW-0808">Transferase</keyword>
<protein>
    <recommendedName>
        <fullName evidence="1">Aminomethyltransferase</fullName>
        <ecNumber evidence="1">2.1.2.10</ecNumber>
    </recommendedName>
    <alternativeName>
        <fullName evidence="1">Glycine cleavage system T protein</fullName>
    </alternativeName>
</protein>
<proteinExistence type="inferred from homology"/>
<reference key="1">
    <citation type="submission" date="2008-10" db="EMBL/GenBank/DDBJ databases">
        <title>Genome sequence of Bacillus cereus AH820.</title>
        <authorList>
            <person name="Dodson R.J."/>
            <person name="Durkin A.S."/>
            <person name="Rosovitz M.J."/>
            <person name="Rasko D.A."/>
            <person name="Hoffmaster A."/>
            <person name="Ravel J."/>
            <person name="Sutton G."/>
        </authorList>
    </citation>
    <scope>NUCLEOTIDE SEQUENCE [LARGE SCALE GENOMIC DNA]</scope>
    <source>
        <strain>AH820</strain>
    </source>
</reference>
<feature type="chain" id="PRO_1000119193" description="Aminomethyltransferase">
    <location>
        <begin position="1"/>
        <end position="366"/>
    </location>
</feature>
<evidence type="ECO:0000255" key="1">
    <source>
        <dbReference type="HAMAP-Rule" id="MF_00259"/>
    </source>
</evidence>
<comment type="function">
    <text evidence="1">The glycine cleavage system catalyzes the degradation of glycine.</text>
</comment>
<comment type="catalytic activity">
    <reaction evidence="1">
        <text>N(6)-[(R)-S(8)-aminomethyldihydrolipoyl]-L-lysyl-[protein] + (6S)-5,6,7,8-tetrahydrofolate = N(6)-[(R)-dihydrolipoyl]-L-lysyl-[protein] + (6R)-5,10-methylene-5,6,7,8-tetrahydrofolate + NH4(+)</text>
        <dbReference type="Rhea" id="RHEA:16945"/>
        <dbReference type="Rhea" id="RHEA-COMP:10475"/>
        <dbReference type="Rhea" id="RHEA-COMP:10492"/>
        <dbReference type="ChEBI" id="CHEBI:15636"/>
        <dbReference type="ChEBI" id="CHEBI:28938"/>
        <dbReference type="ChEBI" id="CHEBI:57453"/>
        <dbReference type="ChEBI" id="CHEBI:83100"/>
        <dbReference type="ChEBI" id="CHEBI:83143"/>
        <dbReference type="EC" id="2.1.2.10"/>
    </reaction>
</comment>
<comment type="subunit">
    <text evidence="1">The glycine cleavage system is composed of four proteins: P, T, L and H.</text>
</comment>
<comment type="similarity">
    <text evidence="1">Belongs to the GcvT family.</text>
</comment>
<sequence length="366" mass="40225">MITLQRTPLFDVYAKYGGKTIDFGGWELPVQFSSIKEEHEAVRTAAGLFDVSHMGEVEVKGVDSLAFLQRVVTNDVSTLKVGGAQYTAMCYENGGTVDDLLIYKRGEEDYLLVINASNIEKDYEWLASHVIGDATVVNVSSEVAQLAIQGPKAEGILQKVVSEDLKEIKFFKFKNDILVDGIPALVSRTGYTGEDGFEIYCKSEDAAKLWEKLLEVGAEEGLKACGLGARDTLRFEATLPLYGQELSKDITPIEAGIGFAVKTNKEADFFGKATLKEQKENGAPRKLVGIEVIERGIPRTHYPVFIGEEKIGEVTSGTQSPTLKKSIGLALIDVKYAAVDTEVEIEIRNKRVKAVVVPTPFYKRSK</sequence>
<gene>
    <name evidence="1" type="primary">gcvT</name>
    <name type="ordered locus">BCAH820_4247</name>
</gene>
<accession>B7JMV1</accession>
<name>GCST_BACC0</name>